<name>TRMD_ACIB5</name>
<sequence>MFFAVITLFPEMFDAITAYGISGRAAKRDIVQVTCINPRDFAEGNYRRVDERPFGGGPGMVMMAEPLAKAINHAKQLASRAGCVHVPVVYMSPQGKTLNEQAVQQFVDYDGLIVLCGRYEGVDERLIQHYVDQEWSIGDYVLSGGELPAMVLLDSIIRRLPNVMSDEQSAIQDSFVDGLLDCPQYTKPDQFEGLDVPEILKSGHHANIEKWRFLQRYQRTLERRPELIEQVTLTKQQKKWLSDEQG</sequence>
<evidence type="ECO:0000255" key="1">
    <source>
        <dbReference type="HAMAP-Rule" id="MF_00605"/>
    </source>
</evidence>
<reference key="1">
    <citation type="journal article" date="2008" name="J. Bacteriol.">
        <title>Comparative genome sequence analysis of multidrug-resistant Acinetobacter baumannii.</title>
        <authorList>
            <person name="Adams M.D."/>
            <person name="Goglin K."/>
            <person name="Molyneaux N."/>
            <person name="Hujer K.M."/>
            <person name="Lavender H."/>
            <person name="Jamison J.J."/>
            <person name="MacDonald I.J."/>
            <person name="Martin K.M."/>
            <person name="Russo T."/>
            <person name="Campagnari A.A."/>
            <person name="Hujer A.M."/>
            <person name="Bonomo R.A."/>
            <person name="Gill S.R."/>
        </authorList>
    </citation>
    <scope>NUCLEOTIDE SEQUENCE [LARGE SCALE GENOMIC DNA]</scope>
    <source>
        <strain>AB0057</strain>
    </source>
</reference>
<accession>B7IAT0</accession>
<comment type="function">
    <text evidence="1">Specifically methylates guanosine-37 in various tRNAs.</text>
</comment>
<comment type="catalytic activity">
    <reaction evidence="1">
        <text>guanosine(37) in tRNA + S-adenosyl-L-methionine = N(1)-methylguanosine(37) in tRNA + S-adenosyl-L-homocysteine + H(+)</text>
        <dbReference type="Rhea" id="RHEA:36899"/>
        <dbReference type="Rhea" id="RHEA-COMP:10145"/>
        <dbReference type="Rhea" id="RHEA-COMP:10147"/>
        <dbReference type="ChEBI" id="CHEBI:15378"/>
        <dbReference type="ChEBI" id="CHEBI:57856"/>
        <dbReference type="ChEBI" id="CHEBI:59789"/>
        <dbReference type="ChEBI" id="CHEBI:73542"/>
        <dbReference type="ChEBI" id="CHEBI:74269"/>
        <dbReference type="EC" id="2.1.1.228"/>
    </reaction>
</comment>
<comment type="subunit">
    <text evidence="1">Homodimer.</text>
</comment>
<comment type="subcellular location">
    <subcellularLocation>
        <location evidence="1">Cytoplasm</location>
    </subcellularLocation>
</comment>
<comment type="similarity">
    <text evidence="1">Belongs to the RNA methyltransferase TrmD family.</text>
</comment>
<protein>
    <recommendedName>
        <fullName evidence="1">tRNA (guanine-N(1)-)-methyltransferase</fullName>
        <ecNumber evidence="1">2.1.1.228</ecNumber>
    </recommendedName>
    <alternativeName>
        <fullName evidence="1">M1G-methyltransferase</fullName>
    </alternativeName>
    <alternativeName>
        <fullName evidence="1">tRNA [GM37] methyltransferase</fullName>
    </alternativeName>
</protein>
<gene>
    <name evidence="1" type="primary">trmD</name>
    <name type="ordered locus">AB57_3616</name>
</gene>
<dbReference type="EC" id="2.1.1.228" evidence="1"/>
<dbReference type="EMBL" id="CP001182">
    <property type="protein sequence ID" value="ACJ42977.1"/>
    <property type="molecule type" value="Genomic_DNA"/>
</dbReference>
<dbReference type="RefSeq" id="WP_000464595.1">
    <property type="nucleotide sequence ID" value="NC_011586.2"/>
</dbReference>
<dbReference type="SMR" id="B7IAT0"/>
<dbReference type="KEGG" id="abn:AB57_3616"/>
<dbReference type="HOGENOM" id="CLU_047363_0_1_6"/>
<dbReference type="Proteomes" id="UP000007094">
    <property type="component" value="Chromosome"/>
</dbReference>
<dbReference type="GO" id="GO:0005829">
    <property type="term" value="C:cytosol"/>
    <property type="evidence" value="ECO:0007669"/>
    <property type="project" value="TreeGrafter"/>
</dbReference>
<dbReference type="GO" id="GO:0052906">
    <property type="term" value="F:tRNA (guanine(37)-N1)-methyltransferase activity"/>
    <property type="evidence" value="ECO:0007669"/>
    <property type="project" value="UniProtKB-UniRule"/>
</dbReference>
<dbReference type="GO" id="GO:0002939">
    <property type="term" value="P:tRNA N1-guanine methylation"/>
    <property type="evidence" value="ECO:0007669"/>
    <property type="project" value="TreeGrafter"/>
</dbReference>
<dbReference type="CDD" id="cd18080">
    <property type="entry name" value="TrmD-like"/>
    <property type="match status" value="1"/>
</dbReference>
<dbReference type="FunFam" id="1.10.1270.20:FF:000001">
    <property type="entry name" value="tRNA (guanine-N(1)-)-methyltransferase"/>
    <property type="match status" value="1"/>
</dbReference>
<dbReference type="FunFam" id="3.40.1280.10:FF:000001">
    <property type="entry name" value="tRNA (guanine-N(1)-)-methyltransferase"/>
    <property type="match status" value="1"/>
</dbReference>
<dbReference type="Gene3D" id="3.40.1280.10">
    <property type="match status" value="1"/>
</dbReference>
<dbReference type="Gene3D" id="1.10.1270.20">
    <property type="entry name" value="tRNA(m1g37)methyltransferase, domain 2"/>
    <property type="match status" value="1"/>
</dbReference>
<dbReference type="HAMAP" id="MF_00605">
    <property type="entry name" value="TrmD"/>
    <property type="match status" value="1"/>
</dbReference>
<dbReference type="InterPro" id="IPR029028">
    <property type="entry name" value="Alpha/beta_knot_MTases"/>
</dbReference>
<dbReference type="InterPro" id="IPR023148">
    <property type="entry name" value="tRNA_m1G_MeTrfase_C_sf"/>
</dbReference>
<dbReference type="InterPro" id="IPR002649">
    <property type="entry name" value="tRNA_m1G_MeTrfase_TrmD"/>
</dbReference>
<dbReference type="InterPro" id="IPR029026">
    <property type="entry name" value="tRNA_m1G_MTases_N"/>
</dbReference>
<dbReference type="InterPro" id="IPR016009">
    <property type="entry name" value="tRNA_MeTrfase_TRMD/TRM10"/>
</dbReference>
<dbReference type="NCBIfam" id="NF000648">
    <property type="entry name" value="PRK00026.1"/>
    <property type="match status" value="1"/>
</dbReference>
<dbReference type="NCBIfam" id="TIGR00088">
    <property type="entry name" value="trmD"/>
    <property type="match status" value="1"/>
</dbReference>
<dbReference type="PANTHER" id="PTHR46417">
    <property type="entry name" value="TRNA (GUANINE-N(1)-)-METHYLTRANSFERASE"/>
    <property type="match status" value="1"/>
</dbReference>
<dbReference type="PANTHER" id="PTHR46417:SF1">
    <property type="entry name" value="TRNA (GUANINE-N(1)-)-METHYLTRANSFERASE"/>
    <property type="match status" value="1"/>
</dbReference>
<dbReference type="Pfam" id="PF01746">
    <property type="entry name" value="tRNA_m1G_MT"/>
    <property type="match status" value="1"/>
</dbReference>
<dbReference type="PIRSF" id="PIRSF000386">
    <property type="entry name" value="tRNA_mtase"/>
    <property type="match status" value="1"/>
</dbReference>
<dbReference type="SUPFAM" id="SSF75217">
    <property type="entry name" value="alpha/beta knot"/>
    <property type="match status" value="1"/>
</dbReference>
<proteinExistence type="inferred from homology"/>
<keyword id="KW-0963">Cytoplasm</keyword>
<keyword id="KW-0489">Methyltransferase</keyword>
<keyword id="KW-0949">S-adenosyl-L-methionine</keyword>
<keyword id="KW-0808">Transferase</keyword>
<keyword id="KW-0819">tRNA processing</keyword>
<organism>
    <name type="scientific">Acinetobacter baumannii (strain AB0057)</name>
    <dbReference type="NCBI Taxonomy" id="480119"/>
    <lineage>
        <taxon>Bacteria</taxon>
        <taxon>Pseudomonadati</taxon>
        <taxon>Pseudomonadota</taxon>
        <taxon>Gammaproteobacteria</taxon>
        <taxon>Moraxellales</taxon>
        <taxon>Moraxellaceae</taxon>
        <taxon>Acinetobacter</taxon>
        <taxon>Acinetobacter calcoaceticus/baumannii complex</taxon>
    </lineage>
</organism>
<feature type="chain" id="PRO_1000130119" description="tRNA (guanine-N(1)-)-methyltransferase">
    <location>
        <begin position="1"/>
        <end position="246"/>
    </location>
</feature>
<feature type="binding site" evidence="1">
    <location>
        <position position="117"/>
    </location>
    <ligand>
        <name>S-adenosyl-L-methionine</name>
        <dbReference type="ChEBI" id="CHEBI:59789"/>
    </ligand>
</feature>
<feature type="binding site" evidence="1">
    <location>
        <begin position="137"/>
        <end position="142"/>
    </location>
    <ligand>
        <name>S-adenosyl-L-methionine</name>
        <dbReference type="ChEBI" id="CHEBI:59789"/>
    </ligand>
</feature>